<dbReference type="EC" id="2.7.13.3"/>
<dbReference type="EMBL" id="AF165314">
    <property type="protein sequence ID" value="AAF85897.1"/>
    <property type="molecule type" value="Genomic_DNA"/>
</dbReference>
<dbReference type="EMBL" id="CP000253">
    <property type="protein sequence ID" value="ABD30512.1"/>
    <property type="molecule type" value="Genomic_DNA"/>
</dbReference>
<dbReference type="RefSeq" id="WP_000166801.1">
    <property type="nucleotide sequence ID" value="NZ_LS483365.1"/>
</dbReference>
<dbReference type="RefSeq" id="YP_499945.1">
    <property type="nucleotide sequence ID" value="NC_007795.1"/>
</dbReference>
<dbReference type="SMR" id="Q9KJN3"/>
<dbReference type="STRING" id="93061.SAOUHSC_01419"/>
<dbReference type="PaxDb" id="1280-SAXN108_1433"/>
<dbReference type="GeneID" id="3920650"/>
<dbReference type="KEGG" id="sao:SAOUHSC_01419"/>
<dbReference type="PATRIC" id="fig|93061.5.peg.1298"/>
<dbReference type="eggNOG" id="COG5002">
    <property type="taxonomic scope" value="Bacteria"/>
</dbReference>
<dbReference type="HOGENOM" id="CLU_000445_89_6_9"/>
<dbReference type="OrthoDB" id="9786919at2"/>
<dbReference type="PRO" id="PR:Q9KJN3"/>
<dbReference type="Proteomes" id="UP000008816">
    <property type="component" value="Chromosome"/>
</dbReference>
<dbReference type="GO" id="GO:0005886">
    <property type="term" value="C:plasma membrane"/>
    <property type="evidence" value="ECO:0000318"/>
    <property type="project" value="GO_Central"/>
</dbReference>
<dbReference type="GO" id="GO:0005524">
    <property type="term" value="F:ATP binding"/>
    <property type="evidence" value="ECO:0007669"/>
    <property type="project" value="UniProtKB-KW"/>
</dbReference>
<dbReference type="GO" id="GO:0009927">
    <property type="term" value="F:histidine phosphotransfer kinase activity"/>
    <property type="evidence" value="ECO:0000318"/>
    <property type="project" value="GO_Central"/>
</dbReference>
<dbReference type="GO" id="GO:0000155">
    <property type="term" value="F:phosphorelay sensor kinase activity"/>
    <property type="evidence" value="ECO:0000318"/>
    <property type="project" value="GO_Central"/>
</dbReference>
<dbReference type="GO" id="GO:0008236">
    <property type="term" value="F:serine-type peptidase activity"/>
    <property type="evidence" value="ECO:0000315"/>
    <property type="project" value="CACAO"/>
</dbReference>
<dbReference type="GO" id="GO:0000160">
    <property type="term" value="P:phosphorelay signal transduction system"/>
    <property type="evidence" value="ECO:0000318"/>
    <property type="project" value="GO_Central"/>
</dbReference>
<dbReference type="CDD" id="cd00075">
    <property type="entry name" value="HATPase"/>
    <property type="match status" value="1"/>
</dbReference>
<dbReference type="CDD" id="cd00082">
    <property type="entry name" value="HisKA"/>
    <property type="match status" value="1"/>
</dbReference>
<dbReference type="FunFam" id="3.30.565.10:FF:000006">
    <property type="entry name" value="Sensor histidine kinase WalK"/>
    <property type="match status" value="1"/>
</dbReference>
<dbReference type="FunFam" id="1.10.287.130:FF:000001">
    <property type="entry name" value="Two-component sensor histidine kinase"/>
    <property type="match status" value="1"/>
</dbReference>
<dbReference type="Gene3D" id="1.10.287.130">
    <property type="match status" value="1"/>
</dbReference>
<dbReference type="Gene3D" id="6.10.340.10">
    <property type="match status" value="1"/>
</dbReference>
<dbReference type="Gene3D" id="3.30.565.10">
    <property type="entry name" value="Histidine kinase-like ATPase, C-terminal domain"/>
    <property type="match status" value="1"/>
</dbReference>
<dbReference type="InterPro" id="IPR041610">
    <property type="entry name" value="ArlS_N"/>
</dbReference>
<dbReference type="InterPro" id="IPR050398">
    <property type="entry name" value="Bact_Sensor_His_Kinase"/>
</dbReference>
<dbReference type="InterPro" id="IPR003660">
    <property type="entry name" value="HAMP_dom"/>
</dbReference>
<dbReference type="InterPro" id="IPR036890">
    <property type="entry name" value="HATPase_C_sf"/>
</dbReference>
<dbReference type="InterPro" id="IPR005467">
    <property type="entry name" value="His_kinase_dom"/>
</dbReference>
<dbReference type="InterPro" id="IPR003661">
    <property type="entry name" value="HisK_dim/P_dom"/>
</dbReference>
<dbReference type="InterPro" id="IPR036097">
    <property type="entry name" value="HisK_dim/P_sf"/>
</dbReference>
<dbReference type="InterPro" id="IPR004358">
    <property type="entry name" value="Sig_transdc_His_kin-like_C"/>
</dbReference>
<dbReference type="PANTHER" id="PTHR45528:SF12">
    <property type="entry name" value="SENSOR HISTIDINE KINASE ARSS"/>
    <property type="match status" value="1"/>
</dbReference>
<dbReference type="PANTHER" id="PTHR45528">
    <property type="entry name" value="SENSOR HISTIDINE KINASE CPXA"/>
    <property type="match status" value="1"/>
</dbReference>
<dbReference type="Pfam" id="PF18719">
    <property type="entry name" value="ArlS_N"/>
    <property type="match status" value="1"/>
</dbReference>
<dbReference type="Pfam" id="PF02518">
    <property type="entry name" value="HATPase_c"/>
    <property type="match status" value="1"/>
</dbReference>
<dbReference type="Pfam" id="PF00512">
    <property type="entry name" value="HisKA"/>
    <property type="match status" value="1"/>
</dbReference>
<dbReference type="PRINTS" id="PR00344">
    <property type="entry name" value="BCTRLSENSOR"/>
</dbReference>
<dbReference type="SMART" id="SM00387">
    <property type="entry name" value="HATPase_c"/>
    <property type="match status" value="1"/>
</dbReference>
<dbReference type="SMART" id="SM00388">
    <property type="entry name" value="HisKA"/>
    <property type="match status" value="1"/>
</dbReference>
<dbReference type="SUPFAM" id="SSF55874">
    <property type="entry name" value="ATPase domain of HSP90 chaperone/DNA topoisomerase II/histidine kinase"/>
    <property type="match status" value="1"/>
</dbReference>
<dbReference type="SUPFAM" id="SSF158472">
    <property type="entry name" value="HAMP domain-like"/>
    <property type="match status" value="1"/>
</dbReference>
<dbReference type="SUPFAM" id="SSF47384">
    <property type="entry name" value="Homodimeric domain of signal transducing histidine kinase"/>
    <property type="match status" value="1"/>
</dbReference>
<dbReference type="PROSITE" id="PS50885">
    <property type="entry name" value="HAMP"/>
    <property type="match status" value="1"/>
</dbReference>
<dbReference type="PROSITE" id="PS50109">
    <property type="entry name" value="HIS_KIN"/>
    <property type="match status" value="1"/>
</dbReference>
<organism>
    <name type="scientific">Staphylococcus aureus (strain NCTC 8325 / PS 47)</name>
    <dbReference type="NCBI Taxonomy" id="93061"/>
    <lineage>
        <taxon>Bacteria</taxon>
        <taxon>Bacillati</taxon>
        <taxon>Bacillota</taxon>
        <taxon>Bacilli</taxon>
        <taxon>Bacillales</taxon>
        <taxon>Staphylococcaceae</taxon>
        <taxon>Staphylococcus</taxon>
    </lineage>
</organism>
<accession>Q9KJN3</accession>
<accession>Q2FYM0</accession>
<sequence>MTKRKLRNNWIIVTTMITFVTIFLFCLIIIFFLKDTLHNSELDDAERSSSDINNLFHSKPVKDISALDLNASLGNFQEIIIYDEHNNKLFETSNDNTVRVEPGYEHRYFDRVIKKRYKGIEYLIIKEPITTQDFKGYSLLIHSLENYDNIVKSLYIIALAFGVIATIITATISYVFSTQITKPLVSLSNKMIEIRRDGFQNKLQLNTNYEEIDNLANTFNEMMSQIEESFNQQRQFVEDASHELRTPLQIIQGHLNLIQRWGKKDPAVLEESLNISIEEMNRIIKLVEELLELTKGDVNDISSEAQTVHINDEIRSRIHSLKQLHPDYQFDTDLTSKNLEIKMKPHQFEQLFLIFIDNAIKYDVKNKKIKVKTRLKNKQKIIEITDHGIGIPEEDQDFIFDRFYRVDKSRSRSQGGNGLGLSIAQKIIQLNGGSIKIKSEINKGTTFKIIF</sequence>
<evidence type="ECO:0000255" key="1"/>
<evidence type="ECO:0000255" key="2">
    <source>
        <dbReference type="PROSITE-ProRule" id="PRU00102"/>
    </source>
</evidence>
<evidence type="ECO:0000255" key="3">
    <source>
        <dbReference type="PROSITE-ProRule" id="PRU00107"/>
    </source>
</evidence>
<evidence type="ECO:0000269" key="4">
    <source>
    </source>
</evidence>
<evidence type="ECO:0000269" key="5">
    <source>
    </source>
</evidence>
<evidence type="ECO:0000269" key="6">
    <source>
    </source>
</evidence>
<evidence type="ECO:0000269" key="7">
    <source>
    </source>
</evidence>
<evidence type="ECO:0000269" key="8">
    <source>
    </source>
</evidence>
<evidence type="ECO:0000305" key="9"/>
<comment type="function">
    <text evidence="4 5 6 7 8">Member of the two-component regulatory system ArlS/ArlR involved in the regulation of adhesion, autolysis, multidrug resistance and virulence. ArlS probably functions as a sensor protein kinase which is autophosphorylated at a histidine residue and transfers its phosphate group to ArlR. ArlS/ArlR affects expression of the multidrug resistance transporter norA and interacts with both Agr (virulence accessory gene regulator) (negatively) and SarA (staphylococcal accessory regulator) (positively) to modulate several virulence factor genes, including ssp (serine protease), spa (surface protein A) and hla (alpha-hemolysin). Could inhibit biofilm development by a mechanism independent of the presence of the poly-N-acetylglucosamine (PNAG). Also, Arl proteins are required for the efficient activity of DNA gyrase inhibitors and high osmolarity on spa expression.</text>
</comment>
<comment type="catalytic activity">
    <reaction>
        <text>ATP + protein L-histidine = ADP + protein N-phospho-L-histidine.</text>
        <dbReference type="EC" id="2.7.13.3"/>
    </reaction>
</comment>
<comment type="subcellular location">
    <subcellularLocation>
        <location evidence="9">Cell membrane</location>
        <topology evidence="9">Multi-pass membrane protein</topology>
    </subcellularLocation>
</comment>
<comment type="induction">
    <text>Activated by agr, SarA, SarV and MgrA.</text>
</comment>
<comment type="PTM">
    <text evidence="9">Autophosphorylated.</text>
</comment>
<reference key="1">
    <citation type="journal article" date="2000" name="J. Bacteriol.">
        <title>A new two-component regulatory system involved in adhesion, autolysis, and extracellular proteolytic activity of Staphylococcus aureus.</title>
        <authorList>
            <person name="Fournier B."/>
            <person name="Hooper D.C."/>
        </authorList>
    </citation>
    <scope>NUCLEOTIDE SEQUENCE [GENOMIC DNA]</scope>
    <scope>FUNCTION</scope>
</reference>
<reference key="2">
    <citation type="book" date="2006" name="Gram positive pathogens, 2nd edition">
        <title>The Staphylococcus aureus NCTC 8325 genome.</title>
        <editorList>
            <person name="Fischetti V."/>
            <person name="Novick R."/>
            <person name="Ferretti J."/>
            <person name="Portnoy D."/>
            <person name="Rood J."/>
        </editorList>
        <authorList>
            <person name="Gillaspy A.F."/>
            <person name="Worrell V."/>
            <person name="Orvis J."/>
            <person name="Roe B.A."/>
            <person name="Dyer D.W."/>
            <person name="Iandolo J.J."/>
        </authorList>
    </citation>
    <scope>NUCLEOTIDE SEQUENCE [LARGE SCALE GENOMIC DNA]</scope>
    <source>
        <strain>NCTC 8325 / PS 47</strain>
    </source>
</reference>
<reference key="3">
    <citation type="journal article" date="2000" name="J. Bacteriol.">
        <title>Expression of the multidrug resistance transporter NorA from Staphylococcus aureus is modified by a two-component regulatory system.</title>
        <authorList>
            <person name="Fournier B."/>
            <person name="Aras R."/>
            <person name="Hooper D.C."/>
        </authorList>
    </citation>
    <scope>FUNCTION</scope>
</reference>
<reference key="4">
    <citation type="journal article" date="2001" name="Mol. Microbiol.">
        <title>The two-component system ArlS-ArlR is a regulator of virulence gene expression in Staphylococcus aureus.</title>
        <authorList>
            <person name="Fournier B."/>
            <person name="Klier A."/>
            <person name="Rapoport G."/>
        </authorList>
    </citation>
    <scope>FUNCTION</scope>
    <scope>REGULATION</scope>
</reference>
<reference key="5">
    <citation type="journal article" date="2003" name="Mol. Microbiol.">
        <title>Characterization of RAT, an autolysis regulator in Staphylococcus aureus.</title>
        <authorList>
            <person name="Ingavale S.S."/>
            <person name="Van Wamel W."/>
            <person name="Cheung A.L."/>
        </authorList>
    </citation>
    <scope>REGULATION BY MGRA</scope>
</reference>
<reference key="6">
    <citation type="journal article" date="2004" name="J. Bacteriol.">
        <title>Identification of sarV (SA2062), a new transcriptional regulator, is repressed by SarA and MgrA (SA0641) and involved in the regulation of autolysis in Staphylococcus aureus.</title>
        <authorList>
            <person name="Manna A.C."/>
            <person name="Ingavale S.S."/>
            <person name="Maloney M."/>
            <person name="van Wamel W."/>
            <person name="Cheung A.L."/>
        </authorList>
    </citation>
    <scope>REGULATION BY SARV</scope>
</reference>
<reference key="7">
    <citation type="journal article" date="2004" name="Microbiology">
        <title>Protein A gene expression is regulated by DNA supercoiling which is modified by the ArlS-ArlR two-component system of Staphylococcus aureus.</title>
        <authorList>
            <person name="Fournier B."/>
            <person name="Klier A."/>
        </authorList>
    </citation>
    <scope>FUNCTION</scope>
</reference>
<reference key="8">
    <citation type="journal article" date="2005" name="J. Bacteriol.">
        <title>Staphylococcus aureus develops an alternative, ica-independent biofilm in the absence of the arlRS two-component system.</title>
        <authorList>
            <person name="Toledo-Arana A."/>
            <person name="Merino N."/>
            <person name="Vergara-Irigaray M."/>
            <person name="Debarbouille M."/>
            <person name="Penades J.R."/>
            <person name="Lasa I."/>
        </authorList>
    </citation>
    <scope>FUNCTION IN BIOFILM DEVELOPMENT</scope>
</reference>
<keyword id="KW-0067">ATP-binding</keyword>
<keyword id="KW-1003">Cell membrane</keyword>
<keyword id="KW-0418">Kinase</keyword>
<keyword id="KW-0472">Membrane</keyword>
<keyword id="KW-0547">Nucleotide-binding</keyword>
<keyword id="KW-0597">Phosphoprotein</keyword>
<keyword id="KW-1185">Reference proteome</keyword>
<keyword id="KW-0808">Transferase</keyword>
<keyword id="KW-0812">Transmembrane</keyword>
<keyword id="KW-1133">Transmembrane helix</keyword>
<keyword id="KW-0902">Two-component regulatory system</keyword>
<keyword id="KW-0843">Virulence</keyword>
<gene>
    <name type="primary">arlS</name>
    <name type="ordered locus">SAOUHSC_01419</name>
</gene>
<proteinExistence type="evidence at protein level"/>
<protein>
    <recommendedName>
        <fullName>Signal transduction histidine-protein kinase ArlS</fullName>
        <ecNumber>2.7.13.3</ecNumber>
    </recommendedName>
</protein>
<name>ARLS_STAA8</name>
<feature type="chain" id="PRO_0000074688" description="Signal transduction histidine-protein kinase ArlS">
    <location>
        <begin position="1"/>
        <end position="451"/>
    </location>
</feature>
<feature type="transmembrane region" description="Helical" evidence="1">
    <location>
        <begin position="11"/>
        <end position="31"/>
    </location>
</feature>
<feature type="transmembrane region" description="Helical" evidence="1">
    <location>
        <begin position="156"/>
        <end position="176"/>
    </location>
</feature>
<feature type="domain" description="HAMP" evidence="2">
    <location>
        <begin position="178"/>
        <end position="231"/>
    </location>
</feature>
<feature type="domain" description="Histidine kinase" evidence="3">
    <location>
        <begin position="239"/>
        <end position="451"/>
    </location>
</feature>
<feature type="modified residue" description="Phosphohistidine; by autocatalysis" evidence="3">
    <location>
        <position position="242"/>
    </location>
</feature>